<protein>
    <recommendedName>
        <fullName>Thymosin beta</fullName>
    </recommendedName>
</protein>
<proteinExistence type="inferred from homology"/>
<feature type="initiator methionine" description="Removed" evidence="1">
    <location>
        <position position="1"/>
    </location>
</feature>
<feature type="chain" id="PRO_0000045934" description="Thymosin beta">
    <location>
        <begin position="2"/>
        <end position="45"/>
    </location>
</feature>
<feature type="region of interest" description="Disordered" evidence="2">
    <location>
        <begin position="1"/>
        <end position="45"/>
    </location>
</feature>
<feature type="compositionally biased region" description="Basic and acidic residues" evidence="2">
    <location>
        <begin position="12"/>
        <end position="25"/>
    </location>
</feature>
<feature type="compositionally biased region" description="Basic and acidic residues" evidence="2">
    <location>
        <begin position="33"/>
        <end position="45"/>
    </location>
</feature>
<reference key="1">
    <citation type="journal article" date="1999" name="Development">
        <title>Beta-thymosin is required for axonal tract formation in developing zebrafish brain.</title>
        <authorList>
            <person name="Roth L.W."/>
            <person name="Bormann P."/>
            <person name="Bonnet A."/>
            <person name="Reinhard E."/>
        </authorList>
    </citation>
    <scope>NUCLEOTIDE SEQUENCE [MRNA]</scope>
</reference>
<comment type="function">
    <text evidence="1">Plays an important role in the organization of the cytoskeleton. Binds to and sequesters actin monomers (G actin) and therefore inhibits actin polymerization (By similarity).</text>
</comment>
<comment type="subcellular location">
    <subcellularLocation>
        <location evidence="1">Cytoplasm</location>
        <location evidence="1">Cytoskeleton</location>
    </subcellularLocation>
</comment>
<comment type="similarity">
    <text evidence="3">Belongs to the thymosin beta family.</text>
</comment>
<keyword id="KW-0009">Actin-binding</keyword>
<keyword id="KW-0963">Cytoplasm</keyword>
<keyword id="KW-0206">Cytoskeleton</keyword>
<keyword id="KW-1185">Reference proteome</keyword>
<organism>
    <name type="scientific">Danio rerio</name>
    <name type="common">Zebrafish</name>
    <name type="synonym">Brachydanio rerio</name>
    <dbReference type="NCBI Taxonomy" id="7955"/>
    <lineage>
        <taxon>Eukaryota</taxon>
        <taxon>Metazoa</taxon>
        <taxon>Chordata</taxon>
        <taxon>Craniata</taxon>
        <taxon>Vertebrata</taxon>
        <taxon>Euteleostomi</taxon>
        <taxon>Actinopterygii</taxon>
        <taxon>Neopterygii</taxon>
        <taxon>Teleostei</taxon>
        <taxon>Ostariophysi</taxon>
        <taxon>Cypriniformes</taxon>
        <taxon>Danionidae</taxon>
        <taxon>Danioninae</taxon>
        <taxon>Danio</taxon>
    </lineage>
</organism>
<name>TYB_DANRE</name>
<sequence length="45" mass="5208">MADKPNMTEITSFDKTKLRKTETQEKNPLPTKETIEQERQGESTP</sequence>
<gene>
    <name type="primary">tmsb</name>
</gene>
<dbReference type="EMBL" id="AF006831">
    <property type="protein sequence ID" value="AAD42010.1"/>
    <property type="molecule type" value="mRNA"/>
</dbReference>
<dbReference type="RefSeq" id="NP_991144.1">
    <property type="nucleotide sequence ID" value="NM_205581.1"/>
</dbReference>
<dbReference type="SMR" id="Q9W7M8"/>
<dbReference type="STRING" id="7955.ENSDARP00000071665"/>
<dbReference type="PaxDb" id="7955-ENSDARP00000071665"/>
<dbReference type="Ensembl" id="ENSDART00000077197">
    <property type="protein sequence ID" value="ENSDARP00000071665"/>
    <property type="gene ID" value="ENSDARG00000054911"/>
</dbReference>
<dbReference type="Ensembl" id="ENSDART00000185643">
    <property type="protein sequence ID" value="ENSDARP00000147634"/>
    <property type="gene ID" value="ENSDARG00000054911"/>
</dbReference>
<dbReference type="GeneID" id="402820"/>
<dbReference type="KEGG" id="dre:402820"/>
<dbReference type="AGR" id="ZFIN:ZDB-GENE-050307-5"/>
<dbReference type="CTD" id="402820"/>
<dbReference type="ZFIN" id="ZDB-GENE-050307-5">
    <property type="gene designation" value="tmsb"/>
</dbReference>
<dbReference type="eggNOG" id="KOG4794">
    <property type="taxonomic scope" value="Eukaryota"/>
</dbReference>
<dbReference type="HOGENOM" id="CLU_208046_0_0_1"/>
<dbReference type="InParanoid" id="Q9W7M8"/>
<dbReference type="OrthoDB" id="2151618at2759"/>
<dbReference type="PhylomeDB" id="Q9W7M8"/>
<dbReference type="PRO" id="PR:Q9W7M8"/>
<dbReference type="Proteomes" id="UP000000437">
    <property type="component" value="Chromosome 21"/>
</dbReference>
<dbReference type="Bgee" id="ENSDARG00000054911">
    <property type="expression patterns" value="Expressed in larva and 19 other cell types or tissues"/>
</dbReference>
<dbReference type="ExpressionAtlas" id="Q9W7M8">
    <property type="expression patterns" value="baseline and differential"/>
</dbReference>
<dbReference type="GO" id="GO:0005737">
    <property type="term" value="C:cytoplasm"/>
    <property type="evidence" value="ECO:0000318"/>
    <property type="project" value="GO_Central"/>
</dbReference>
<dbReference type="GO" id="GO:0005856">
    <property type="term" value="C:cytoskeleton"/>
    <property type="evidence" value="ECO:0007669"/>
    <property type="project" value="UniProtKB-SubCell"/>
</dbReference>
<dbReference type="GO" id="GO:0003785">
    <property type="term" value="F:actin monomer binding"/>
    <property type="evidence" value="ECO:0000318"/>
    <property type="project" value="GO_Central"/>
</dbReference>
<dbReference type="GO" id="GO:0007015">
    <property type="term" value="P:actin filament organization"/>
    <property type="evidence" value="ECO:0007669"/>
    <property type="project" value="InterPro"/>
</dbReference>
<dbReference type="GO" id="GO:0043152">
    <property type="term" value="P:induction of bacterial agglutination"/>
    <property type="evidence" value="ECO:0000314"/>
    <property type="project" value="ZFIN"/>
</dbReference>
<dbReference type="GO" id="GO:0030334">
    <property type="term" value="P:regulation of cell migration"/>
    <property type="evidence" value="ECO:0000318"/>
    <property type="project" value="GO_Central"/>
</dbReference>
<dbReference type="GO" id="GO:0106014">
    <property type="term" value="P:regulation of inflammatory response to wounding"/>
    <property type="evidence" value="ECO:0000314"/>
    <property type="project" value="ZFIN"/>
</dbReference>
<dbReference type="FunFam" id="1.20.5.520:FF:000001">
    <property type="entry name" value="Thymosin beta"/>
    <property type="match status" value="1"/>
</dbReference>
<dbReference type="Gene3D" id="1.20.5.520">
    <property type="entry name" value="Single helix bin"/>
    <property type="match status" value="1"/>
</dbReference>
<dbReference type="InterPro" id="IPR001152">
    <property type="entry name" value="Beta-thymosin"/>
</dbReference>
<dbReference type="InterPro" id="IPR038386">
    <property type="entry name" value="Beta-thymosin_sf"/>
</dbReference>
<dbReference type="PANTHER" id="PTHR12021">
    <property type="entry name" value="THYMOSIN BETA"/>
    <property type="match status" value="1"/>
</dbReference>
<dbReference type="PANTHER" id="PTHR12021:SF3">
    <property type="entry name" value="THYMOSIN BETA-4-LIKE"/>
    <property type="match status" value="1"/>
</dbReference>
<dbReference type="Pfam" id="PF01290">
    <property type="entry name" value="Thymosin"/>
    <property type="match status" value="1"/>
</dbReference>
<dbReference type="PIRSF" id="PIRSF001828">
    <property type="entry name" value="Thymosin_beta"/>
    <property type="match status" value="1"/>
</dbReference>
<dbReference type="SMART" id="SM00152">
    <property type="entry name" value="THY"/>
    <property type="match status" value="1"/>
</dbReference>
<dbReference type="PROSITE" id="PS00500">
    <property type="entry name" value="THYMOSIN_B4"/>
    <property type="match status" value="1"/>
</dbReference>
<evidence type="ECO:0000250" key="1"/>
<evidence type="ECO:0000256" key="2">
    <source>
        <dbReference type="SAM" id="MobiDB-lite"/>
    </source>
</evidence>
<evidence type="ECO:0000305" key="3"/>
<accession>Q9W7M8</accession>